<feature type="chain" id="PRO_0000329947" description="Polyribonucleotide nucleotidyltransferase">
    <location>
        <begin position="1"/>
        <end position="705"/>
    </location>
</feature>
<feature type="domain" description="KH" evidence="1">
    <location>
        <begin position="553"/>
        <end position="612"/>
    </location>
</feature>
<feature type="domain" description="S1 motif" evidence="1">
    <location>
        <begin position="622"/>
        <end position="690"/>
    </location>
</feature>
<feature type="binding site" evidence="1">
    <location>
        <position position="486"/>
    </location>
    <ligand>
        <name>Mg(2+)</name>
        <dbReference type="ChEBI" id="CHEBI:18420"/>
    </ligand>
</feature>
<feature type="binding site" evidence="1">
    <location>
        <position position="492"/>
    </location>
    <ligand>
        <name>Mg(2+)</name>
        <dbReference type="ChEBI" id="CHEBI:18420"/>
    </ligand>
</feature>
<organism>
    <name type="scientific">Yersinia pestis</name>
    <dbReference type="NCBI Taxonomy" id="632"/>
    <lineage>
        <taxon>Bacteria</taxon>
        <taxon>Pseudomonadati</taxon>
        <taxon>Pseudomonadota</taxon>
        <taxon>Gammaproteobacteria</taxon>
        <taxon>Enterobacterales</taxon>
        <taxon>Yersiniaceae</taxon>
        <taxon>Yersinia</taxon>
    </lineage>
</organism>
<keyword id="KW-0963">Cytoplasm</keyword>
<keyword id="KW-0460">Magnesium</keyword>
<keyword id="KW-0479">Metal-binding</keyword>
<keyword id="KW-0548">Nucleotidyltransferase</keyword>
<keyword id="KW-1185">Reference proteome</keyword>
<keyword id="KW-0694">RNA-binding</keyword>
<keyword id="KW-0808">Transferase</keyword>
<reference key="1">
    <citation type="journal article" date="2001" name="Nature">
        <title>Genome sequence of Yersinia pestis, the causative agent of plague.</title>
        <authorList>
            <person name="Parkhill J."/>
            <person name="Wren B.W."/>
            <person name="Thomson N.R."/>
            <person name="Titball R.W."/>
            <person name="Holden M.T.G."/>
            <person name="Prentice M.B."/>
            <person name="Sebaihia M."/>
            <person name="James K.D."/>
            <person name="Churcher C.M."/>
            <person name="Mungall K.L."/>
            <person name="Baker S."/>
            <person name="Basham D."/>
            <person name="Bentley S.D."/>
            <person name="Brooks K."/>
            <person name="Cerdeno-Tarraga A.-M."/>
            <person name="Chillingworth T."/>
            <person name="Cronin A."/>
            <person name="Davies R.M."/>
            <person name="Davis P."/>
            <person name="Dougan G."/>
            <person name="Feltwell T."/>
            <person name="Hamlin N."/>
            <person name="Holroyd S."/>
            <person name="Jagels K."/>
            <person name="Karlyshev A.V."/>
            <person name="Leather S."/>
            <person name="Moule S."/>
            <person name="Oyston P.C.F."/>
            <person name="Quail M.A."/>
            <person name="Rutherford K.M."/>
            <person name="Simmonds M."/>
            <person name="Skelton J."/>
            <person name="Stevens K."/>
            <person name="Whitehead S."/>
            <person name="Barrell B.G."/>
        </authorList>
    </citation>
    <scope>NUCLEOTIDE SEQUENCE [LARGE SCALE GENOMIC DNA]</scope>
    <source>
        <strain>CO-92 / Biovar Orientalis</strain>
    </source>
</reference>
<reference key="2">
    <citation type="journal article" date="2002" name="J. Bacteriol.">
        <title>Genome sequence of Yersinia pestis KIM.</title>
        <authorList>
            <person name="Deng W."/>
            <person name="Burland V."/>
            <person name="Plunkett G. III"/>
            <person name="Boutin A."/>
            <person name="Mayhew G.F."/>
            <person name="Liss P."/>
            <person name="Perna N.T."/>
            <person name="Rose D.J."/>
            <person name="Mau B."/>
            <person name="Zhou S."/>
            <person name="Schwartz D.C."/>
            <person name="Fetherston J.D."/>
            <person name="Lindler L.E."/>
            <person name="Brubaker R.R."/>
            <person name="Plano G.V."/>
            <person name="Straley S.C."/>
            <person name="McDonough K.A."/>
            <person name="Nilles M.L."/>
            <person name="Matson J.S."/>
            <person name="Blattner F.R."/>
            <person name="Perry R.D."/>
        </authorList>
    </citation>
    <scope>NUCLEOTIDE SEQUENCE [LARGE SCALE GENOMIC DNA]</scope>
    <source>
        <strain>KIM10+ / Biovar Mediaevalis</strain>
    </source>
</reference>
<reference key="3">
    <citation type="journal article" date="2004" name="DNA Res.">
        <title>Complete genome sequence of Yersinia pestis strain 91001, an isolate avirulent to humans.</title>
        <authorList>
            <person name="Song Y."/>
            <person name="Tong Z."/>
            <person name="Wang J."/>
            <person name="Wang L."/>
            <person name="Guo Z."/>
            <person name="Han Y."/>
            <person name="Zhang J."/>
            <person name="Pei D."/>
            <person name="Zhou D."/>
            <person name="Qin H."/>
            <person name="Pang X."/>
            <person name="Han Y."/>
            <person name="Zhai J."/>
            <person name="Li M."/>
            <person name="Cui B."/>
            <person name="Qi Z."/>
            <person name="Jin L."/>
            <person name="Dai R."/>
            <person name="Chen F."/>
            <person name="Li S."/>
            <person name="Ye C."/>
            <person name="Du Z."/>
            <person name="Lin W."/>
            <person name="Wang J."/>
            <person name="Yu J."/>
            <person name="Yang H."/>
            <person name="Wang J."/>
            <person name="Huang P."/>
            <person name="Yang R."/>
        </authorList>
    </citation>
    <scope>NUCLEOTIDE SEQUENCE [LARGE SCALE GENOMIC DNA]</scope>
    <source>
        <strain>91001 / Biovar Mediaevalis</strain>
    </source>
</reference>
<sequence>MLTPIIRKFQYGQHTVTIETGMMARQATAAVMVSMDDTAVFVTVVGQKKAKPGQSFFPLTVNYQERTYAAGRIPGSFFRREGRPSEGETLTSRLIDRPIRPLFPDSFLNEVQVIATVVSVNPQINPDIVALIGASAALSLSGIPFNGPIGAARVGFINDQYVLNPTTDELKESRLDLVVAGTAGAVLMVESEADILSEEQMLGAVVFGHEQQQVVIENINALVAEAGKPKWDWQAEPVNEALHARVAELAEARLGDAYRITEKQERYTQVDAIKADVTEALLAQDDTLDAAEIQDILASVEKNVVRSRVLRGEPRIDGREKDMIRGLDVRTGILPRTHGSALFTRGETQALVTATLGTARDAQNIDELMGERTDSFLLHYNFPPYCVGETGMVGSPKRREIGHGRLAKRGVLAVMPSASEFPYTIRVVSEITESNGSSSMASVCGASLALMDAGVPIKAAVAGIAMGLVKEGDNFVVLSDILGDEDHLGDMDFKVAGSRDGVTALQMDIKIEGITREIMQVALNQAKGARLHILGVMEQAISTPRGDISEFAPRIYTMKINPEKIKDVIGKGGSVIRALTDETGTTIEIEDDGTIKIAATDGDKAKHAIRRIEEITAEIEVGRIYAGKVTRIVDFGAFVAIGGGKEGLVHISQIADKRVEKVTDYLQMGQDVPVKVMEVDRQGRIRLSIKEATTPDAEAPEAAAE</sequence>
<protein>
    <recommendedName>
        <fullName evidence="1">Polyribonucleotide nucleotidyltransferase</fullName>
        <ecNumber evidence="1">2.7.7.8</ecNumber>
    </recommendedName>
    <alternativeName>
        <fullName evidence="1">Polynucleotide phosphorylase</fullName>
        <shortName evidence="1">PNPase</shortName>
    </alternativeName>
</protein>
<dbReference type="EC" id="2.7.7.8" evidence="1"/>
<dbReference type="EMBL" id="AL590842">
    <property type="protein sequence ID" value="CAL22078.1"/>
    <property type="molecule type" value="Genomic_DNA"/>
</dbReference>
<dbReference type="EMBL" id="AE009952">
    <property type="protein sequence ID" value="AAM84282.1"/>
    <property type="status" value="ALT_INIT"/>
    <property type="molecule type" value="Genomic_DNA"/>
</dbReference>
<dbReference type="EMBL" id="AE017042">
    <property type="protein sequence ID" value="AAS60863.1"/>
    <property type="status" value="ALT_INIT"/>
    <property type="molecule type" value="Genomic_DNA"/>
</dbReference>
<dbReference type="PIR" id="AC0424">
    <property type="entry name" value="AC0424"/>
</dbReference>
<dbReference type="RefSeq" id="WP_002209259.1">
    <property type="nucleotide sequence ID" value="NZ_WUCM01000023.1"/>
</dbReference>
<dbReference type="RefSeq" id="YP_002348379.1">
    <property type="nucleotide sequence ID" value="NC_003143.1"/>
</dbReference>
<dbReference type="SMR" id="Q0WBF9"/>
<dbReference type="IntAct" id="Q0WBF9">
    <property type="interactions" value="5"/>
</dbReference>
<dbReference type="STRING" id="214092.YPO3490"/>
<dbReference type="PaxDb" id="214092-YPO3490"/>
<dbReference type="DNASU" id="1145641"/>
<dbReference type="EnsemblBacteria" id="AAS60863">
    <property type="protein sequence ID" value="AAS60863"/>
    <property type="gene ID" value="YP_0593"/>
</dbReference>
<dbReference type="GeneID" id="57975224"/>
<dbReference type="KEGG" id="ype:YPO3490"/>
<dbReference type="KEGG" id="ypk:y0694"/>
<dbReference type="KEGG" id="ypm:YP_0593"/>
<dbReference type="PATRIC" id="fig|214092.21.peg.3984"/>
<dbReference type="eggNOG" id="COG1185">
    <property type="taxonomic scope" value="Bacteria"/>
</dbReference>
<dbReference type="HOGENOM" id="CLU_004217_2_2_6"/>
<dbReference type="OMA" id="RFMFHYN"/>
<dbReference type="OrthoDB" id="9804305at2"/>
<dbReference type="Proteomes" id="UP000000815">
    <property type="component" value="Chromosome"/>
</dbReference>
<dbReference type="Proteomes" id="UP000001019">
    <property type="component" value="Chromosome"/>
</dbReference>
<dbReference type="Proteomes" id="UP000002490">
    <property type="component" value="Chromosome"/>
</dbReference>
<dbReference type="GO" id="GO:0005829">
    <property type="term" value="C:cytosol"/>
    <property type="evidence" value="ECO:0000318"/>
    <property type="project" value="GO_Central"/>
</dbReference>
<dbReference type="GO" id="GO:0000175">
    <property type="term" value="F:3'-5'-RNA exonuclease activity"/>
    <property type="evidence" value="ECO:0000318"/>
    <property type="project" value="GO_Central"/>
</dbReference>
<dbReference type="GO" id="GO:0000287">
    <property type="term" value="F:magnesium ion binding"/>
    <property type="evidence" value="ECO:0007669"/>
    <property type="project" value="UniProtKB-UniRule"/>
</dbReference>
<dbReference type="GO" id="GO:0004654">
    <property type="term" value="F:polyribonucleotide nucleotidyltransferase activity"/>
    <property type="evidence" value="ECO:0000318"/>
    <property type="project" value="GO_Central"/>
</dbReference>
<dbReference type="GO" id="GO:0003723">
    <property type="term" value="F:RNA binding"/>
    <property type="evidence" value="ECO:0007669"/>
    <property type="project" value="UniProtKB-UniRule"/>
</dbReference>
<dbReference type="GO" id="GO:0006402">
    <property type="term" value="P:mRNA catabolic process"/>
    <property type="evidence" value="ECO:0007669"/>
    <property type="project" value="UniProtKB-UniRule"/>
</dbReference>
<dbReference type="GO" id="GO:0006401">
    <property type="term" value="P:RNA catabolic process"/>
    <property type="evidence" value="ECO:0000318"/>
    <property type="project" value="GO_Central"/>
</dbReference>
<dbReference type="GO" id="GO:0006396">
    <property type="term" value="P:RNA processing"/>
    <property type="evidence" value="ECO:0007669"/>
    <property type="project" value="InterPro"/>
</dbReference>
<dbReference type="CDD" id="cd02393">
    <property type="entry name" value="KH-I_PNPase"/>
    <property type="match status" value="1"/>
</dbReference>
<dbReference type="CDD" id="cd11363">
    <property type="entry name" value="RNase_PH_PNPase_1"/>
    <property type="match status" value="1"/>
</dbReference>
<dbReference type="CDD" id="cd11364">
    <property type="entry name" value="RNase_PH_PNPase_2"/>
    <property type="match status" value="1"/>
</dbReference>
<dbReference type="CDD" id="cd04472">
    <property type="entry name" value="S1_PNPase"/>
    <property type="match status" value="1"/>
</dbReference>
<dbReference type="FunFam" id="2.40.50.140:FF:000023">
    <property type="entry name" value="Polyribonucleotide nucleotidyltransferase"/>
    <property type="match status" value="1"/>
</dbReference>
<dbReference type="FunFam" id="3.30.1370.10:FF:000001">
    <property type="entry name" value="Polyribonucleotide nucleotidyltransferase"/>
    <property type="match status" value="1"/>
</dbReference>
<dbReference type="FunFam" id="3.30.230.70:FF:000001">
    <property type="entry name" value="Polyribonucleotide nucleotidyltransferase"/>
    <property type="match status" value="1"/>
</dbReference>
<dbReference type="FunFam" id="3.30.230.70:FF:000002">
    <property type="entry name" value="Polyribonucleotide nucleotidyltransferase"/>
    <property type="match status" value="1"/>
</dbReference>
<dbReference type="Gene3D" id="3.30.230.70">
    <property type="entry name" value="GHMP Kinase, N-terminal domain"/>
    <property type="match status" value="2"/>
</dbReference>
<dbReference type="Gene3D" id="3.30.1370.10">
    <property type="entry name" value="K Homology domain, type 1"/>
    <property type="match status" value="1"/>
</dbReference>
<dbReference type="Gene3D" id="2.40.50.140">
    <property type="entry name" value="Nucleic acid-binding proteins"/>
    <property type="match status" value="1"/>
</dbReference>
<dbReference type="HAMAP" id="MF_01595">
    <property type="entry name" value="PNPase"/>
    <property type="match status" value="1"/>
</dbReference>
<dbReference type="InterPro" id="IPR001247">
    <property type="entry name" value="ExoRNase_PH_dom1"/>
</dbReference>
<dbReference type="InterPro" id="IPR015847">
    <property type="entry name" value="ExoRNase_PH_dom2"/>
</dbReference>
<dbReference type="InterPro" id="IPR036345">
    <property type="entry name" value="ExoRNase_PH_dom2_sf"/>
</dbReference>
<dbReference type="InterPro" id="IPR004087">
    <property type="entry name" value="KH_dom"/>
</dbReference>
<dbReference type="InterPro" id="IPR004088">
    <property type="entry name" value="KH_dom_type_1"/>
</dbReference>
<dbReference type="InterPro" id="IPR036612">
    <property type="entry name" value="KH_dom_type_1_sf"/>
</dbReference>
<dbReference type="InterPro" id="IPR012340">
    <property type="entry name" value="NA-bd_OB-fold"/>
</dbReference>
<dbReference type="InterPro" id="IPR012162">
    <property type="entry name" value="PNPase"/>
</dbReference>
<dbReference type="InterPro" id="IPR027408">
    <property type="entry name" value="PNPase/RNase_PH_dom_sf"/>
</dbReference>
<dbReference type="InterPro" id="IPR015848">
    <property type="entry name" value="PNPase_PH_RNA-bd_bac/org-type"/>
</dbReference>
<dbReference type="InterPro" id="IPR036456">
    <property type="entry name" value="PNPase_PH_RNA-bd_sf"/>
</dbReference>
<dbReference type="InterPro" id="IPR020568">
    <property type="entry name" value="Ribosomal_Su5_D2-typ_SF"/>
</dbReference>
<dbReference type="InterPro" id="IPR003029">
    <property type="entry name" value="S1_domain"/>
</dbReference>
<dbReference type="NCBIfam" id="TIGR03591">
    <property type="entry name" value="polynuc_phos"/>
    <property type="match status" value="1"/>
</dbReference>
<dbReference type="NCBIfam" id="NF008805">
    <property type="entry name" value="PRK11824.1"/>
    <property type="match status" value="1"/>
</dbReference>
<dbReference type="PANTHER" id="PTHR11252">
    <property type="entry name" value="POLYRIBONUCLEOTIDE NUCLEOTIDYLTRANSFERASE"/>
    <property type="match status" value="1"/>
</dbReference>
<dbReference type="PANTHER" id="PTHR11252:SF0">
    <property type="entry name" value="POLYRIBONUCLEOTIDE NUCLEOTIDYLTRANSFERASE 1, MITOCHONDRIAL"/>
    <property type="match status" value="1"/>
</dbReference>
<dbReference type="Pfam" id="PF00013">
    <property type="entry name" value="KH_1"/>
    <property type="match status" value="1"/>
</dbReference>
<dbReference type="Pfam" id="PF03726">
    <property type="entry name" value="PNPase"/>
    <property type="match status" value="1"/>
</dbReference>
<dbReference type="Pfam" id="PF01138">
    <property type="entry name" value="RNase_PH"/>
    <property type="match status" value="2"/>
</dbReference>
<dbReference type="Pfam" id="PF03725">
    <property type="entry name" value="RNase_PH_C"/>
    <property type="match status" value="2"/>
</dbReference>
<dbReference type="Pfam" id="PF00575">
    <property type="entry name" value="S1"/>
    <property type="match status" value="1"/>
</dbReference>
<dbReference type="PIRSF" id="PIRSF005499">
    <property type="entry name" value="PNPase"/>
    <property type="match status" value="1"/>
</dbReference>
<dbReference type="SMART" id="SM00322">
    <property type="entry name" value="KH"/>
    <property type="match status" value="1"/>
</dbReference>
<dbReference type="SMART" id="SM00316">
    <property type="entry name" value="S1"/>
    <property type="match status" value="1"/>
</dbReference>
<dbReference type="SUPFAM" id="SSF54791">
    <property type="entry name" value="Eukaryotic type KH-domain (KH-domain type I)"/>
    <property type="match status" value="1"/>
</dbReference>
<dbReference type="SUPFAM" id="SSF50249">
    <property type="entry name" value="Nucleic acid-binding proteins"/>
    <property type="match status" value="1"/>
</dbReference>
<dbReference type="SUPFAM" id="SSF46915">
    <property type="entry name" value="Polynucleotide phosphorylase/guanosine pentaphosphate synthase (PNPase/GPSI), domain 3"/>
    <property type="match status" value="1"/>
</dbReference>
<dbReference type="SUPFAM" id="SSF55666">
    <property type="entry name" value="Ribonuclease PH domain 2-like"/>
    <property type="match status" value="2"/>
</dbReference>
<dbReference type="SUPFAM" id="SSF54211">
    <property type="entry name" value="Ribosomal protein S5 domain 2-like"/>
    <property type="match status" value="2"/>
</dbReference>
<dbReference type="PROSITE" id="PS50084">
    <property type="entry name" value="KH_TYPE_1"/>
    <property type="match status" value="1"/>
</dbReference>
<dbReference type="PROSITE" id="PS50126">
    <property type="entry name" value="S1"/>
    <property type="match status" value="1"/>
</dbReference>
<comment type="function">
    <text evidence="1">Involved in mRNA degradation. Catalyzes the phosphorolysis of single-stranded polyribonucleotides processively in the 3'- to 5'-direction.</text>
</comment>
<comment type="catalytic activity">
    <reaction evidence="1">
        <text>RNA(n+1) + phosphate = RNA(n) + a ribonucleoside 5'-diphosphate</text>
        <dbReference type="Rhea" id="RHEA:22096"/>
        <dbReference type="Rhea" id="RHEA-COMP:14527"/>
        <dbReference type="Rhea" id="RHEA-COMP:17342"/>
        <dbReference type="ChEBI" id="CHEBI:43474"/>
        <dbReference type="ChEBI" id="CHEBI:57930"/>
        <dbReference type="ChEBI" id="CHEBI:140395"/>
        <dbReference type="EC" id="2.7.7.8"/>
    </reaction>
</comment>
<comment type="cofactor">
    <cofactor evidence="1">
        <name>Mg(2+)</name>
        <dbReference type="ChEBI" id="CHEBI:18420"/>
    </cofactor>
</comment>
<comment type="subunit">
    <text evidence="1">Component of the RNA degradosome, which is a multiprotein complex involved in RNA processing and mRNA degradation.</text>
</comment>
<comment type="subcellular location">
    <subcellularLocation>
        <location evidence="1">Cytoplasm</location>
    </subcellularLocation>
</comment>
<comment type="similarity">
    <text evidence="1">Belongs to the polyribonucleotide nucleotidyltransferase family.</text>
</comment>
<comment type="sequence caution" evidence="2">
    <conflict type="erroneous initiation">
        <sequence resource="EMBL-CDS" id="AAM84282"/>
    </conflict>
</comment>
<comment type="sequence caution" evidence="2">
    <conflict type="erroneous initiation">
        <sequence resource="EMBL-CDS" id="AAS60863"/>
    </conflict>
</comment>
<gene>
    <name evidence="1" type="primary">pnp</name>
    <name type="ordered locus">YPO3490</name>
    <name type="ordered locus">y0694</name>
    <name type="ordered locus">YP_0593</name>
</gene>
<proteinExistence type="inferred from homology"/>
<name>PNP_YERPE</name>
<accession>Q0WBF9</accession>
<accession>Q74X66</accession>
<accession>Q8D1D1</accession>
<evidence type="ECO:0000255" key="1">
    <source>
        <dbReference type="HAMAP-Rule" id="MF_01595"/>
    </source>
</evidence>
<evidence type="ECO:0000305" key="2"/>